<keyword id="KW-0030">Aminoacyl-tRNA synthetase</keyword>
<keyword id="KW-0067">ATP-binding</keyword>
<keyword id="KW-0963">Cytoplasm</keyword>
<keyword id="KW-0436">Ligase</keyword>
<keyword id="KW-0547">Nucleotide-binding</keyword>
<keyword id="KW-0648">Protein biosynthesis</keyword>
<keyword id="KW-1185">Reference proteome</keyword>
<feature type="chain" id="PRO_1000016466" description="Histidine--tRNA ligase">
    <location>
        <begin position="1"/>
        <end position="426"/>
    </location>
</feature>
<protein>
    <recommendedName>
        <fullName evidence="1">Histidine--tRNA ligase</fullName>
        <ecNumber evidence="1">6.1.1.21</ecNumber>
    </recommendedName>
    <alternativeName>
        <fullName evidence="1">Histidyl-tRNA synthetase</fullName>
        <shortName evidence="1">HisRS</shortName>
    </alternativeName>
</protein>
<accession>A3CR40</accession>
<reference key="1">
    <citation type="journal article" date="2007" name="J. Bacteriol.">
        <title>Genome of the opportunistic pathogen Streptococcus sanguinis.</title>
        <authorList>
            <person name="Xu P."/>
            <person name="Alves J.M."/>
            <person name="Kitten T."/>
            <person name="Brown A."/>
            <person name="Chen Z."/>
            <person name="Ozaki L.S."/>
            <person name="Manque P."/>
            <person name="Ge X."/>
            <person name="Serrano M.G."/>
            <person name="Puiu D."/>
            <person name="Hendricks S."/>
            <person name="Wang Y."/>
            <person name="Chaplin M.D."/>
            <person name="Akan D."/>
            <person name="Paik S."/>
            <person name="Peterson D.L."/>
            <person name="Macrina F.L."/>
            <person name="Buck G.A."/>
        </authorList>
    </citation>
    <scope>NUCLEOTIDE SEQUENCE [LARGE SCALE GENOMIC DNA]</scope>
    <source>
        <strain>SK36</strain>
    </source>
</reference>
<evidence type="ECO:0000255" key="1">
    <source>
        <dbReference type="HAMAP-Rule" id="MF_00127"/>
    </source>
</evidence>
<name>SYH_STRSV</name>
<organism>
    <name type="scientific">Streptococcus sanguinis (strain SK36)</name>
    <dbReference type="NCBI Taxonomy" id="388919"/>
    <lineage>
        <taxon>Bacteria</taxon>
        <taxon>Bacillati</taxon>
        <taxon>Bacillota</taxon>
        <taxon>Bacilli</taxon>
        <taxon>Lactobacillales</taxon>
        <taxon>Streptococcaceae</taxon>
        <taxon>Streptococcus</taxon>
    </lineage>
</organism>
<comment type="catalytic activity">
    <reaction evidence="1">
        <text>tRNA(His) + L-histidine + ATP = L-histidyl-tRNA(His) + AMP + diphosphate + H(+)</text>
        <dbReference type="Rhea" id="RHEA:17313"/>
        <dbReference type="Rhea" id="RHEA-COMP:9665"/>
        <dbReference type="Rhea" id="RHEA-COMP:9689"/>
        <dbReference type="ChEBI" id="CHEBI:15378"/>
        <dbReference type="ChEBI" id="CHEBI:30616"/>
        <dbReference type="ChEBI" id="CHEBI:33019"/>
        <dbReference type="ChEBI" id="CHEBI:57595"/>
        <dbReference type="ChEBI" id="CHEBI:78442"/>
        <dbReference type="ChEBI" id="CHEBI:78527"/>
        <dbReference type="ChEBI" id="CHEBI:456215"/>
        <dbReference type="EC" id="6.1.1.21"/>
    </reaction>
</comment>
<comment type="subunit">
    <text evidence="1">Homodimer.</text>
</comment>
<comment type="subcellular location">
    <subcellularLocation>
        <location evidence="1">Cytoplasm</location>
    </subcellularLocation>
</comment>
<comment type="similarity">
    <text evidence="1">Belongs to the class-II aminoacyl-tRNA synthetase family.</text>
</comment>
<proteinExistence type="inferred from homology"/>
<sequence length="426" mass="47971">MKLQKPKGTQDILPQESAKWQYVEDFARKTFRKYNYGEIRTPIFEHYEVISRSVGDTTDIVTKEMYDFYDKGDRHITLRPEGTAPVVRSYVENKLFAPEVQKPVKVYYMGSMFRYERPQAGRLREFHQIGAECFGSSNPATDVEMIAMAAQFFKDIGITNVSLELNSLGNPESRAAYRQALIDYLTPLKASLSADSQRRLEENPLRVLDSKEPEDKAAVEGAPSILDYLDEESSAYFAAVRSMLETLQIPYVINTNMVRGLDYYNHTIFEFTTEVAGSQLTICAGGRYDGLVAYFGGPETPGVGFGMGLERLLLVLDKQGVELPIETALDVYVAVLGADANGRALELVQALRAQGFAAERDYLDRKLKAQFKSADNFKAKTLITLGESEVESGRVTVKNNHNREEITVSLDQIQENYQLIFEKLGF</sequence>
<gene>
    <name evidence="1" type="primary">hisS</name>
    <name type="ordered locus">SSA_2284</name>
</gene>
<dbReference type="EC" id="6.1.1.21" evidence="1"/>
<dbReference type="EMBL" id="CP000387">
    <property type="protein sequence ID" value="ABN45645.1"/>
    <property type="molecule type" value="Genomic_DNA"/>
</dbReference>
<dbReference type="RefSeq" id="WP_011837670.1">
    <property type="nucleotide sequence ID" value="NC_009009.1"/>
</dbReference>
<dbReference type="RefSeq" id="YP_001036195.1">
    <property type="nucleotide sequence ID" value="NC_009009.1"/>
</dbReference>
<dbReference type="SMR" id="A3CR40"/>
<dbReference type="STRING" id="388919.SSA_2284"/>
<dbReference type="KEGG" id="ssa:SSA_2284"/>
<dbReference type="PATRIC" id="fig|388919.9.peg.2166"/>
<dbReference type="eggNOG" id="COG0124">
    <property type="taxonomic scope" value="Bacteria"/>
</dbReference>
<dbReference type="HOGENOM" id="CLU_025113_1_1_9"/>
<dbReference type="OrthoDB" id="9800814at2"/>
<dbReference type="Proteomes" id="UP000002148">
    <property type="component" value="Chromosome"/>
</dbReference>
<dbReference type="GO" id="GO:0005737">
    <property type="term" value="C:cytoplasm"/>
    <property type="evidence" value="ECO:0007669"/>
    <property type="project" value="UniProtKB-SubCell"/>
</dbReference>
<dbReference type="GO" id="GO:0005524">
    <property type="term" value="F:ATP binding"/>
    <property type="evidence" value="ECO:0007669"/>
    <property type="project" value="UniProtKB-UniRule"/>
</dbReference>
<dbReference type="GO" id="GO:0140096">
    <property type="term" value="F:catalytic activity, acting on a protein"/>
    <property type="evidence" value="ECO:0007669"/>
    <property type="project" value="UniProtKB-ARBA"/>
</dbReference>
<dbReference type="GO" id="GO:0004821">
    <property type="term" value="F:histidine-tRNA ligase activity"/>
    <property type="evidence" value="ECO:0007669"/>
    <property type="project" value="UniProtKB-UniRule"/>
</dbReference>
<dbReference type="GO" id="GO:0016740">
    <property type="term" value="F:transferase activity"/>
    <property type="evidence" value="ECO:0007669"/>
    <property type="project" value="UniProtKB-ARBA"/>
</dbReference>
<dbReference type="GO" id="GO:0006427">
    <property type="term" value="P:histidyl-tRNA aminoacylation"/>
    <property type="evidence" value="ECO:0007669"/>
    <property type="project" value="UniProtKB-UniRule"/>
</dbReference>
<dbReference type="CDD" id="cd00773">
    <property type="entry name" value="HisRS-like_core"/>
    <property type="match status" value="1"/>
</dbReference>
<dbReference type="CDD" id="cd00859">
    <property type="entry name" value="HisRS_anticodon"/>
    <property type="match status" value="1"/>
</dbReference>
<dbReference type="FunFam" id="3.30.930.10:FF:000005">
    <property type="entry name" value="Histidine--tRNA ligase"/>
    <property type="match status" value="1"/>
</dbReference>
<dbReference type="Gene3D" id="3.40.50.800">
    <property type="entry name" value="Anticodon-binding domain"/>
    <property type="match status" value="1"/>
</dbReference>
<dbReference type="Gene3D" id="3.30.930.10">
    <property type="entry name" value="Bira Bifunctional Protein, Domain 2"/>
    <property type="match status" value="1"/>
</dbReference>
<dbReference type="HAMAP" id="MF_00127">
    <property type="entry name" value="His_tRNA_synth"/>
    <property type="match status" value="1"/>
</dbReference>
<dbReference type="InterPro" id="IPR006195">
    <property type="entry name" value="aa-tRNA-synth_II"/>
</dbReference>
<dbReference type="InterPro" id="IPR045864">
    <property type="entry name" value="aa-tRNA-synth_II/BPL/LPL"/>
</dbReference>
<dbReference type="InterPro" id="IPR004154">
    <property type="entry name" value="Anticodon-bd"/>
</dbReference>
<dbReference type="InterPro" id="IPR036621">
    <property type="entry name" value="Anticodon-bd_dom_sf"/>
</dbReference>
<dbReference type="InterPro" id="IPR015807">
    <property type="entry name" value="His-tRNA-ligase"/>
</dbReference>
<dbReference type="InterPro" id="IPR041715">
    <property type="entry name" value="HisRS-like_core"/>
</dbReference>
<dbReference type="InterPro" id="IPR004516">
    <property type="entry name" value="HisRS/HisZ"/>
</dbReference>
<dbReference type="InterPro" id="IPR033656">
    <property type="entry name" value="HisRS_anticodon"/>
</dbReference>
<dbReference type="NCBIfam" id="TIGR00442">
    <property type="entry name" value="hisS"/>
    <property type="match status" value="1"/>
</dbReference>
<dbReference type="PANTHER" id="PTHR43707:SF1">
    <property type="entry name" value="HISTIDINE--TRNA LIGASE, MITOCHONDRIAL-RELATED"/>
    <property type="match status" value="1"/>
</dbReference>
<dbReference type="PANTHER" id="PTHR43707">
    <property type="entry name" value="HISTIDYL-TRNA SYNTHETASE"/>
    <property type="match status" value="1"/>
</dbReference>
<dbReference type="Pfam" id="PF03129">
    <property type="entry name" value="HGTP_anticodon"/>
    <property type="match status" value="1"/>
</dbReference>
<dbReference type="Pfam" id="PF13393">
    <property type="entry name" value="tRNA-synt_His"/>
    <property type="match status" value="1"/>
</dbReference>
<dbReference type="PIRSF" id="PIRSF001549">
    <property type="entry name" value="His-tRNA_synth"/>
    <property type="match status" value="1"/>
</dbReference>
<dbReference type="SUPFAM" id="SSF52954">
    <property type="entry name" value="Class II aaRS ABD-related"/>
    <property type="match status" value="1"/>
</dbReference>
<dbReference type="SUPFAM" id="SSF55681">
    <property type="entry name" value="Class II aaRS and biotin synthetases"/>
    <property type="match status" value="1"/>
</dbReference>
<dbReference type="PROSITE" id="PS50862">
    <property type="entry name" value="AA_TRNA_LIGASE_II"/>
    <property type="match status" value="1"/>
</dbReference>